<protein>
    <recommendedName>
        <fullName evidence="1">Xylose isomerase</fullName>
        <ecNumber evidence="1">5.3.1.5</ecNumber>
    </recommendedName>
</protein>
<organism>
    <name type="scientific">Brucella melitensis biotype 1 (strain ATCC 23456 / CCUG 17765 / NCTC 10094 / 16M)</name>
    <dbReference type="NCBI Taxonomy" id="224914"/>
    <lineage>
        <taxon>Bacteria</taxon>
        <taxon>Pseudomonadati</taxon>
        <taxon>Pseudomonadota</taxon>
        <taxon>Alphaproteobacteria</taxon>
        <taxon>Hyphomicrobiales</taxon>
        <taxon>Brucellaceae</taxon>
        <taxon>Brucella/Ochrobactrum group</taxon>
        <taxon>Brucella</taxon>
    </lineage>
</organism>
<evidence type="ECO:0000255" key="1">
    <source>
        <dbReference type="HAMAP-Rule" id="MF_00455"/>
    </source>
</evidence>
<gene>
    <name evidence="1" type="primary">xylA</name>
    <name type="ordered locus">BMEI1387</name>
</gene>
<feature type="chain" id="PRO_0000195771" description="Xylose isomerase">
    <location>
        <begin position="1"/>
        <end position="435"/>
    </location>
</feature>
<feature type="active site" evidence="1">
    <location>
        <position position="100"/>
    </location>
</feature>
<feature type="active site" evidence="1">
    <location>
        <position position="103"/>
    </location>
</feature>
<feature type="binding site" evidence="1">
    <location>
        <position position="231"/>
    </location>
    <ligand>
        <name>Mg(2+)</name>
        <dbReference type="ChEBI" id="CHEBI:18420"/>
        <label>1</label>
    </ligand>
</feature>
<feature type="binding site" evidence="1">
    <location>
        <position position="267"/>
    </location>
    <ligand>
        <name>Mg(2+)</name>
        <dbReference type="ChEBI" id="CHEBI:18420"/>
        <label>1</label>
    </ligand>
</feature>
<feature type="binding site" evidence="1">
    <location>
        <position position="267"/>
    </location>
    <ligand>
        <name>Mg(2+)</name>
        <dbReference type="ChEBI" id="CHEBI:18420"/>
        <label>2</label>
    </ligand>
</feature>
<feature type="binding site" evidence="1">
    <location>
        <position position="270"/>
    </location>
    <ligand>
        <name>Mg(2+)</name>
        <dbReference type="ChEBI" id="CHEBI:18420"/>
        <label>2</label>
    </ligand>
</feature>
<feature type="binding site" evidence="1">
    <location>
        <position position="295"/>
    </location>
    <ligand>
        <name>Mg(2+)</name>
        <dbReference type="ChEBI" id="CHEBI:18420"/>
        <label>1</label>
    </ligand>
</feature>
<feature type="binding site" evidence="1">
    <location>
        <position position="306"/>
    </location>
    <ligand>
        <name>Mg(2+)</name>
        <dbReference type="ChEBI" id="CHEBI:18420"/>
        <label>2</label>
    </ligand>
</feature>
<feature type="binding site" evidence="1">
    <location>
        <position position="308"/>
    </location>
    <ligand>
        <name>Mg(2+)</name>
        <dbReference type="ChEBI" id="CHEBI:18420"/>
        <label>2</label>
    </ligand>
</feature>
<feature type="binding site" evidence="1">
    <location>
        <position position="338"/>
    </location>
    <ligand>
        <name>Mg(2+)</name>
        <dbReference type="ChEBI" id="CHEBI:18420"/>
        <label>1</label>
    </ligand>
</feature>
<comment type="catalytic activity">
    <reaction evidence="1">
        <text>alpha-D-xylose = alpha-D-xylulofuranose</text>
        <dbReference type="Rhea" id="RHEA:22816"/>
        <dbReference type="ChEBI" id="CHEBI:28518"/>
        <dbReference type="ChEBI" id="CHEBI:188998"/>
        <dbReference type="EC" id="5.3.1.5"/>
    </reaction>
</comment>
<comment type="cofactor">
    <cofactor evidence="1">
        <name>Mg(2+)</name>
        <dbReference type="ChEBI" id="CHEBI:18420"/>
    </cofactor>
    <text evidence="1">Binds 2 magnesium ions per subunit.</text>
</comment>
<comment type="subunit">
    <text evidence="1">Homotetramer.</text>
</comment>
<comment type="subcellular location">
    <subcellularLocation>
        <location evidence="1">Cytoplasm</location>
    </subcellularLocation>
</comment>
<comment type="similarity">
    <text evidence="1">Belongs to the xylose isomerase family.</text>
</comment>
<name>XYLA_BRUME</name>
<proteinExistence type="inferred from homology"/>
<keyword id="KW-0119">Carbohydrate metabolism</keyword>
<keyword id="KW-0963">Cytoplasm</keyword>
<keyword id="KW-0413">Isomerase</keyword>
<keyword id="KW-0460">Magnesium</keyword>
<keyword id="KW-0479">Metal-binding</keyword>
<keyword id="KW-0859">Xylose metabolism</keyword>
<reference key="1">
    <citation type="journal article" date="2002" name="Proc. Natl. Acad. Sci. U.S.A.">
        <title>The genome sequence of the facultative intracellular pathogen Brucella melitensis.</title>
        <authorList>
            <person name="DelVecchio V.G."/>
            <person name="Kapatral V."/>
            <person name="Redkar R.J."/>
            <person name="Patra G."/>
            <person name="Mujer C."/>
            <person name="Los T."/>
            <person name="Ivanova N."/>
            <person name="Anderson I."/>
            <person name="Bhattacharyya A."/>
            <person name="Lykidis A."/>
            <person name="Reznik G."/>
            <person name="Jablonski L."/>
            <person name="Larsen N."/>
            <person name="D'Souza M."/>
            <person name="Bernal A."/>
            <person name="Mazur M."/>
            <person name="Goltsman E."/>
            <person name="Selkov E."/>
            <person name="Elzer P.H."/>
            <person name="Hagius S."/>
            <person name="O'Callaghan D."/>
            <person name="Letesson J.-J."/>
            <person name="Haselkorn R."/>
            <person name="Kyrpides N.C."/>
            <person name="Overbeek R."/>
        </authorList>
    </citation>
    <scope>NUCLEOTIDE SEQUENCE [LARGE SCALE GENOMIC DNA]</scope>
    <source>
        <strain>ATCC 23456 / CCUG 17765 / NCTC 10094 / 16M</strain>
    </source>
</reference>
<accession>Q8YFX5</accession>
<sequence length="435" mass="49004">MSTGFFGDIQKVRYEGPESDNPLAFRHYNADEIVLGKRMEDHLRFAVAYWHSFAWEGGDPFGGRTFDRPWFSNEIDAAKLKADVAFEFFSLLGAPYYCFHDADVRPEGRNFAENTRYLNEIVDIFEKKQAETGMKLLWGTANLFSNRRYMAGAATNPDPDVFAFAAATVKTCIDATKRLGGENYVLWGGREGYETLLNTDLSRELDHMGRFLSLVVEYKHKIGFKGTILIEPKPQEPTKHQYDYDVATVYGFLKRYGLENEVKVNIEQGHAILAGHSFEHELALARTLGIFGSIDMNRNDYQSGWDTDQFPNNVPEMALAYYQVLLAGGFTTGGTNFDAKLRRQSLDPQDLLIGHIGGMDCCARGLKAAARMLEDGALSKPLDERYAGWNGEFGKRLLSGLSLDQIAGEVEAKDINPQPKSGRQEYLENIVNRYV</sequence>
<dbReference type="EC" id="5.3.1.5" evidence="1"/>
<dbReference type="EMBL" id="AE008917">
    <property type="protein sequence ID" value="AAL52568.1"/>
    <property type="molecule type" value="Genomic_DNA"/>
</dbReference>
<dbReference type="PIR" id="AE3425">
    <property type="entry name" value="AE3425"/>
</dbReference>
<dbReference type="RefSeq" id="WP_002966715.1">
    <property type="nucleotide sequence ID" value="NZ_GG703778.1"/>
</dbReference>
<dbReference type="SMR" id="Q8YFX5"/>
<dbReference type="GeneID" id="97534105"/>
<dbReference type="KEGG" id="bme:BMEI1387"/>
<dbReference type="KEGG" id="bmel:DK63_17"/>
<dbReference type="PATRIC" id="fig|224914.52.peg.18"/>
<dbReference type="eggNOG" id="COG2115">
    <property type="taxonomic scope" value="Bacteria"/>
</dbReference>
<dbReference type="Proteomes" id="UP000000419">
    <property type="component" value="Chromosome I"/>
</dbReference>
<dbReference type="GO" id="GO:0005737">
    <property type="term" value="C:cytoplasm"/>
    <property type="evidence" value="ECO:0007669"/>
    <property type="project" value="UniProtKB-SubCell"/>
</dbReference>
<dbReference type="GO" id="GO:0000287">
    <property type="term" value="F:magnesium ion binding"/>
    <property type="evidence" value="ECO:0007669"/>
    <property type="project" value="UniProtKB-UniRule"/>
</dbReference>
<dbReference type="GO" id="GO:0009045">
    <property type="term" value="F:xylose isomerase activity"/>
    <property type="evidence" value="ECO:0007669"/>
    <property type="project" value="UniProtKB-UniRule"/>
</dbReference>
<dbReference type="GO" id="GO:0042732">
    <property type="term" value="P:D-xylose metabolic process"/>
    <property type="evidence" value="ECO:0007669"/>
    <property type="project" value="UniProtKB-UniRule"/>
</dbReference>
<dbReference type="FunFam" id="3.20.20.150:FF:000002">
    <property type="entry name" value="Xylose isomerase"/>
    <property type="match status" value="1"/>
</dbReference>
<dbReference type="Gene3D" id="3.20.20.150">
    <property type="entry name" value="Divalent-metal-dependent TIM barrel enzymes"/>
    <property type="match status" value="1"/>
</dbReference>
<dbReference type="HAMAP" id="MF_00455">
    <property type="entry name" value="Xylose_isom_A"/>
    <property type="match status" value="1"/>
</dbReference>
<dbReference type="InterPro" id="IPR036237">
    <property type="entry name" value="Xyl_isomerase-like_sf"/>
</dbReference>
<dbReference type="InterPro" id="IPR013452">
    <property type="entry name" value="Xylose_isom_bac"/>
</dbReference>
<dbReference type="InterPro" id="IPR001998">
    <property type="entry name" value="Xylose_isomerase"/>
</dbReference>
<dbReference type="NCBIfam" id="NF003998">
    <property type="entry name" value="PRK05474.1"/>
    <property type="match status" value="1"/>
</dbReference>
<dbReference type="NCBIfam" id="TIGR02630">
    <property type="entry name" value="xylose_isom_A"/>
    <property type="match status" value="1"/>
</dbReference>
<dbReference type="PANTHER" id="PTHR48408">
    <property type="match status" value="1"/>
</dbReference>
<dbReference type="PANTHER" id="PTHR48408:SF1">
    <property type="entry name" value="XYLOSE ISOMERASE"/>
    <property type="match status" value="1"/>
</dbReference>
<dbReference type="PRINTS" id="PR00688">
    <property type="entry name" value="XYLOSISMRASE"/>
</dbReference>
<dbReference type="SUPFAM" id="SSF51658">
    <property type="entry name" value="Xylose isomerase-like"/>
    <property type="match status" value="1"/>
</dbReference>
<dbReference type="PROSITE" id="PS51415">
    <property type="entry name" value="XYLOSE_ISOMERASE"/>
    <property type="match status" value="1"/>
</dbReference>